<name>RS12_YERPE</name>
<keyword id="KW-1185">Reference proteome</keyword>
<keyword id="KW-0687">Ribonucleoprotein</keyword>
<keyword id="KW-0689">Ribosomal protein</keyword>
<keyword id="KW-0694">RNA-binding</keyword>
<keyword id="KW-0699">rRNA-binding</keyword>
<keyword id="KW-0820">tRNA-binding</keyword>
<feature type="chain" id="PRO_0000146361" description="Small ribosomal subunit protein uS12">
    <location>
        <begin position="1"/>
        <end position="124"/>
    </location>
</feature>
<reference key="1">
    <citation type="journal article" date="2001" name="Nature">
        <title>Genome sequence of Yersinia pestis, the causative agent of plague.</title>
        <authorList>
            <person name="Parkhill J."/>
            <person name="Wren B.W."/>
            <person name="Thomson N.R."/>
            <person name="Titball R.W."/>
            <person name="Holden M.T.G."/>
            <person name="Prentice M.B."/>
            <person name="Sebaihia M."/>
            <person name="James K.D."/>
            <person name="Churcher C.M."/>
            <person name="Mungall K.L."/>
            <person name="Baker S."/>
            <person name="Basham D."/>
            <person name="Bentley S.D."/>
            <person name="Brooks K."/>
            <person name="Cerdeno-Tarraga A.-M."/>
            <person name="Chillingworth T."/>
            <person name="Cronin A."/>
            <person name="Davies R.M."/>
            <person name="Davis P."/>
            <person name="Dougan G."/>
            <person name="Feltwell T."/>
            <person name="Hamlin N."/>
            <person name="Holroyd S."/>
            <person name="Jagels K."/>
            <person name="Karlyshev A.V."/>
            <person name="Leather S."/>
            <person name="Moule S."/>
            <person name="Oyston P.C.F."/>
            <person name="Quail M.A."/>
            <person name="Rutherford K.M."/>
            <person name="Simmonds M."/>
            <person name="Skelton J."/>
            <person name="Stevens K."/>
            <person name="Whitehead S."/>
            <person name="Barrell B.G."/>
        </authorList>
    </citation>
    <scope>NUCLEOTIDE SEQUENCE [LARGE SCALE GENOMIC DNA]</scope>
    <source>
        <strain>CO-92 / Biovar Orientalis</strain>
    </source>
</reference>
<reference key="2">
    <citation type="journal article" date="2002" name="J. Bacteriol.">
        <title>Genome sequence of Yersinia pestis KIM.</title>
        <authorList>
            <person name="Deng W."/>
            <person name="Burland V."/>
            <person name="Plunkett G. III"/>
            <person name="Boutin A."/>
            <person name="Mayhew G.F."/>
            <person name="Liss P."/>
            <person name="Perna N.T."/>
            <person name="Rose D.J."/>
            <person name="Mau B."/>
            <person name="Zhou S."/>
            <person name="Schwartz D.C."/>
            <person name="Fetherston J.D."/>
            <person name="Lindler L.E."/>
            <person name="Brubaker R.R."/>
            <person name="Plano G.V."/>
            <person name="Straley S.C."/>
            <person name="McDonough K.A."/>
            <person name="Nilles M.L."/>
            <person name="Matson J.S."/>
            <person name="Blattner F.R."/>
            <person name="Perry R.D."/>
        </authorList>
    </citation>
    <scope>NUCLEOTIDE SEQUENCE [LARGE SCALE GENOMIC DNA]</scope>
    <source>
        <strain>KIM10+ / Biovar Mediaevalis</strain>
    </source>
</reference>
<reference key="3">
    <citation type="journal article" date="2004" name="DNA Res.">
        <title>Complete genome sequence of Yersinia pestis strain 91001, an isolate avirulent to humans.</title>
        <authorList>
            <person name="Song Y."/>
            <person name="Tong Z."/>
            <person name="Wang J."/>
            <person name="Wang L."/>
            <person name="Guo Z."/>
            <person name="Han Y."/>
            <person name="Zhang J."/>
            <person name="Pei D."/>
            <person name="Zhou D."/>
            <person name="Qin H."/>
            <person name="Pang X."/>
            <person name="Han Y."/>
            <person name="Zhai J."/>
            <person name="Li M."/>
            <person name="Cui B."/>
            <person name="Qi Z."/>
            <person name="Jin L."/>
            <person name="Dai R."/>
            <person name="Chen F."/>
            <person name="Li S."/>
            <person name="Ye C."/>
            <person name="Du Z."/>
            <person name="Lin W."/>
            <person name="Wang J."/>
            <person name="Yu J."/>
            <person name="Yang H."/>
            <person name="Wang J."/>
            <person name="Huang P."/>
            <person name="Yang R."/>
        </authorList>
    </citation>
    <scope>NUCLEOTIDE SEQUENCE [LARGE SCALE GENOMIC DNA]</scope>
    <source>
        <strain>91001 / Biovar Mediaevalis</strain>
    </source>
</reference>
<accession>Q8ZJB5</accession>
<accession>Q0WKA6</accession>
<proteinExistence type="inferred from homology"/>
<dbReference type="EMBL" id="AL590842">
    <property type="protein sequence ID" value="CAL18884.1"/>
    <property type="molecule type" value="Genomic_DNA"/>
</dbReference>
<dbReference type="EMBL" id="AE009952">
    <property type="protein sequence ID" value="AAM87527.1"/>
    <property type="molecule type" value="Genomic_DNA"/>
</dbReference>
<dbReference type="EMBL" id="AE017042">
    <property type="protein sequence ID" value="AAS60475.1"/>
    <property type="molecule type" value="Genomic_DNA"/>
</dbReference>
<dbReference type="RefSeq" id="WP_002212323.1">
    <property type="nucleotide sequence ID" value="NZ_WUCM01000004.1"/>
</dbReference>
<dbReference type="RefSeq" id="YP_002345282.1">
    <property type="nucleotide sequence ID" value="NC_003143.1"/>
</dbReference>
<dbReference type="SMR" id="Q8ZJB5"/>
<dbReference type="STRING" id="214092.YPO0200"/>
<dbReference type="PaxDb" id="214092-YPO0200"/>
<dbReference type="DNASU" id="1148930"/>
<dbReference type="EnsemblBacteria" id="AAS60475">
    <property type="protein sequence ID" value="AAS60475"/>
    <property type="gene ID" value="YP_0199"/>
</dbReference>
<dbReference type="GeneID" id="97454224"/>
<dbReference type="KEGG" id="ype:YPO0200"/>
<dbReference type="KEGG" id="ypk:y3983"/>
<dbReference type="KEGG" id="ypm:YP_0199"/>
<dbReference type="PATRIC" id="fig|214092.21.peg.432"/>
<dbReference type="eggNOG" id="COG0048">
    <property type="taxonomic scope" value="Bacteria"/>
</dbReference>
<dbReference type="HOGENOM" id="CLU_104295_1_2_6"/>
<dbReference type="OMA" id="VCIRVYT"/>
<dbReference type="OrthoDB" id="9802366at2"/>
<dbReference type="Proteomes" id="UP000000815">
    <property type="component" value="Chromosome"/>
</dbReference>
<dbReference type="Proteomes" id="UP000001019">
    <property type="component" value="Chromosome"/>
</dbReference>
<dbReference type="Proteomes" id="UP000002490">
    <property type="component" value="Chromosome"/>
</dbReference>
<dbReference type="GO" id="GO:0005840">
    <property type="term" value="C:ribosome"/>
    <property type="evidence" value="ECO:0000318"/>
    <property type="project" value="GO_Central"/>
</dbReference>
<dbReference type="GO" id="GO:0015935">
    <property type="term" value="C:small ribosomal subunit"/>
    <property type="evidence" value="ECO:0007669"/>
    <property type="project" value="InterPro"/>
</dbReference>
<dbReference type="GO" id="GO:0019843">
    <property type="term" value="F:rRNA binding"/>
    <property type="evidence" value="ECO:0007669"/>
    <property type="project" value="UniProtKB-UniRule"/>
</dbReference>
<dbReference type="GO" id="GO:0003735">
    <property type="term" value="F:structural constituent of ribosome"/>
    <property type="evidence" value="ECO:0000318"/>
    <property type="project" value="GO_Central"/>
</dbReference>
<dbReference type="GO" id="GO:0000049">
    <property type="term" value="F:tRNA binding"/>
    <property type="evidence" value="ECO:0007669"/>
    <property type="project" value="UniProtKB-UniRule"/>
</dbReference>
<dbReference type="GO" id="GO:0006412">
    <property type="term" value="P:translation"/>
    <property type="evidence" value="ECO:0000318"/>
    <property type="project" value="GO_Central"/>
</dbReference>
<dbReference type="CDD" id="cd03368">
    <property type="entry name" value="Ribosomal_S12"/>
    <property type="match status" value="1"/>
</dbReference>
<dbReference type="FunFam" id="2.40.50.140:FF:000001">
    <property type="entry name" value="30S ribosomal protein S12"/>
    <property type="match status" value="1"/>
</dbReference>
<dbReference type="Gene3D" id="2.40.50.140">
    <property type="entry name" value="Nucleic acid-binding proteins"/>
    <property type="match status" value="1"/>
</dbReference>
<dbReference type="HAMAP" id="MF_00403_B">
    <property type="entry name" value="Ribosomal_uS12_B"/>
    <property type="match status" value="1"/>
</dbReference>
<dbReference type="InterPro" id="IPR012340">
    <property type="entry name" value="NA-bd_OB-fold"/>
</dbReference>
<dbReference type="InterPro" id="IPR006032">
    <property type="entry name" value="Ribosomal_uS12"/>
</dbReference>
<dbReference type="InterPro" id="IPR005679">
    <property type="entry name" value="Ribosomal_uS12_bac"/>
</dbReference>
<dbReference type="NCBIfam" id="TIGR00981">
    <property type="entry name" value="rpsL_bact"/>
    <property type="match status" value="1"/>
</dbReference>
<dbReference type="PANTHER" id="PTHR11652">
    <property type="entry name" value="30S RIBOSOMAL PROTEIN S12 FAMILY MEMBER"/>
    <property type="match status" value="1"/>
</dbReference>
<dbReference type="Pfam" id="PF00164">
    <property type="entry name" value="Ribosom_S12_S23"/>
    <property type="match status" value="1"/>
</dbReference>
<dbReference type="PIRSF" id="PIRSF002133">
    <property type="entry name" value="Ribosomal_S12/S23"/>
    <property type="match status" value="1"/>
</dbReference>
<dbReference type="PRINTS" id="PR01034">
    <property type="entry name" value="RIBOSOMALS12"/>
</dbReference>
<dbReference type="SUPFAM" id="SSF50249">
    <property type="entry name" value="Nucleic acid-binding proteins"/>
    <property type="match status" value="1"/>
</dbReference>
<dbReference type="PROSITE" id="PS00055">
    <property type="entry name" value="RIBOSOMAL_S12"/>
    <property type="match status" value="1"/>
</dbReference>
<sequence>MATINQLVRKPRSMKVAKSNVPALEACPQKRGVCTRVYTTTPKKPNSALRKVCRVRLTNGFEVTSYIGGEGHNLQEHSVILIRGGRVKDLPGVRYHTVRGALDCSGVKDRKQSRSKYGVKKPKA</sequence>
<protein>
    <recommendedName>
        <fullName evidence="1">Small ribosomal subunit protein uS12</fullName>
    </recommendedName>
    <alternativeName>
        <fullName evidence="2">30S ribosomal protein S12</fullName>
    </alternativeName>
</protein>
<gene>
    <name evidence="1" type="primary">rpsL</name>
    <name type="ordered locus">YPO0200</name>
    <name type="ordered locus">y3983</name>
    <name type="ordered locus">YP_0199</name>
</gene>
<evidence type="ECO:0000255" key="1">
    <source>
        <dbReference type="HAMAP-Rule" id="MF_00403"/>
    </source>
</evidence>
<evidence type="ECO:0000305" key="2"/>
<comment type="function">
    <text evidence="1">With S4 and S5 plays an important role in translational accuracy.</text>
</comment>
<comment type="function">
    <text evidence="1">Interacts with and stabilizes bases of the 16S rRNA that are involved in tRNA selection in the A site and with the mRNA backbone. Located at the interface of the 30S and 50S subunits, it traverses the body of the 30S subunit contacting proteins on the other side and probably holding the rRNA structure together. The combined cluster of proteins S8, S12 and S17 appears to hold together the shoulder and platform of the 30S subunit.</text>
</comment>
<comment type="subunit">
    <text evidence="1">Part of the 30S ribosomal subunit. Contacts proteins S8 and S17. May interact with IF1 in the 30S initiation complex.</text>
</comment>
<comment type="similarity">
    <text evidence="1">Belongs to the universal ribosomal protein uS12 family.</text>
</comment>
<comment type="caution">
    <text evidence="2">Because the enzyme that would modify Asp-89 to 3-methylthioaspartic acid has not been found in the proteome of this organism, that modification is not predicted.</text>
</comment>
<organism>
    <name type="scientific">Yersinia pestis</name>
    <dbReference type="NCBI Taxonomy" id="632"/>
    <lineage>
        <taxon>Bacteria</taxon>
        <taxon>Pseudomonadati</taxon>
        <taxon>Pseudomonadota</taxon>
        <taxon>Gammaproteobacteria</taxon>
        <taxon>Enterobacterales</taxon>
        <taxon>Yersiniaceae</taxon>
        <taxon>Yersinia</taxon>
    </lineage>
</organism>